<organism>
    <name type="scientific">Gallus gallus</name>
    <name type="common">Chicken</name>
    <dbReference type="NCBI Taxonomy" id="9031"/>
    <lineage>
        <taxon>Eukaryota</taxon>
        <taxon>Metazoa</taxon>
        <taxon>Chordata</taxon>
        <taxon>Craniata</taxon>
        <taxon>Vertebrata</taxon>
        <taxon>Euteleostomi</taxon>
        <taxon>Archelosauria</taxon>
        <taxon>Archosauria</taxon>
        <taxon>Dinosauria</taxon>
        <taxon>Saurischia</taxon>
        <taxon>Theropoda</taxon>
        <taxon>Coelurosauria</taxon>
        <taxon>Aves</taxon>
        <taxon>Neognathae</taxon>
        <taxon>Galloanserae</taxon>
        <taxon>Galliformes</taxon>
        <taxon>Phasianidae</taxon>
        <taxon>Phasianinae</taxon>
        <taxon>Gallus</taxon>
    </lineage>
</organism>
<proteinExistence type="evidence at transcript level"/>
<comment type="function">
    <text evidence="2">Transcriptional repressor that binds the core 5'GNNTGTNG-3' DNA consensus sequence.</text>
</comment>
<comment type="subunit">
    <text evidence="1">Probably self-associates.</text>
</comment>
<comment type="subcellular location">
    <subcellularLocation>
        <location evidence="2">Nucleus</location>
    </subcellularLocation>
</comment>
<comment type="miscellaneous">
    <text>'Pegasus' was the winged horse in Greek mythology.</text>
</comment>
<comment type="similarity">
    <text evidence="5">Belongs to the Ikaros C2H2-type zinc-finger protein family.</text>
</comment>
<keyword id="KW-0238">DNA-binding</keyword>
<keyword id="KW-0479">Metal-binding</keyword>
<keyword id="KW-0539">Nucleus</keyword>
<keyword id="KW-1185">Reference proteome</keyword>
<keyword id="KW-0677">Repeat</keyword>
<keyword id="KW-0678">Repressor</keyword>
<keyword id="KW-0804">Transcription</keyword>
<keyword id="KW-0805">Transcription regulation</keyword>
<keyword id="KW-0862">Zinc</keyword>
<keyword id="KW-0863">Zinc-finger</keyword>
<dbReference type="EMBL" id="AJ719672">
    <property type="protein sequence ID" value="CAG31331.1"/>
    <property type="molecule type" value="mRNA"/>
</dbReference>
<dbReference type="RefSeq" id="NP_001026766.1">
    <property type="nucleotide sequence ID" value="NM_001031595.2"/>
</dbReference>
<dbReference type="RefSeq" id="XP_040558424.1">
    <property type="nucleotide sequence ID" value="XM_040702490.2"/>
</dbReference>
<dbReference type="RefSeq" id="XP_046776357.1">
    <property type="nucleotide sequence ID" value="XM_046920401.1"/>
</dbReference>
<dbReference type="RefSeq" id="XP_046776358.1">
    <property type="nucleotide sequence ID" value="XM_046920402.1"/>
</dbReference>
<dbReference type="RefSeq" id="XP_046798927.1">
    <property type="nucleotide sequence ID" value="XM_046942971.1"/>
</dbReference>
<dbReference type="SMR" id="Q5ZLR2"/>
<dbReference type="FunCoup" id="Q5ZLR2">
    <property type="interactions" value="1734"/>
</dbReference>
<dbReference type="STRING" id="9031.ENSGALP00000056934"/>
<dbReference type="GlyGen" id="Q5ZLR2">
    <property type="glycosylation" value="2 sites"/>
</dbReference>
<dbReference type="PaxDb" id="9031-ENSGALP00000042828"/>
<dbReference type="Ensembl" id="ENSGALT00010004087.1">
    <property type="protein sequence ID" value="ENSGALP00010002384.1"/>
    <property type="gene ID" value="ENSGALG00010001793.1"/>
</dbReference>
<dbReference type="GeneID" id="430882"/>
<dbReference type="KEGG" id="gga:430882"/>
<dbReference type="CTD" id="64376"/>
<dbReference type="VEuPathDB" id="HostDB:geneid_430882"/>
<dbReference type="eggNOG" id="KOG1721">
    <property type="taxonomic scope" value="Eukaryota"/>
</dbReference>
<dbReference type="GeneTree" id="ENSGT00940000155035"/>
<dbReference type="HOGENOM" id="CLU_734778_0_0_1"/>
<dbReference type="InParanoid" id="Q5ZLR2"/>
<dbReference type="OMA" id="FMIQQPT"/>
<dbReference type="OrthoDB" id="5576026at2759"/>
<dbReference type="PhylomeDB" id="Q5ZLR2"/>
<dbReference type="PRO" id="PR:Q5ZLR2"/>
<dbReference type="Proteomes" id="UP000000539">
    <property type="component" value="Chromosome 6"/>
</dbReference>
<dbReference type="Bgee" id="ENSGALG00000032289">
    <property type="expression patterns" value="Expressed in spermatid and 12 other cell types or tissues"/>
</dbReference>
<dbReference type="GO" id="GO:0005634">
    <property type="term" value="C:nucleus"/>
    <property type="evidence" value="ECO:0000250"/>
    <property type="project" value="UniProtKB"/>
</dbReference>
<dbReference type="GO" id="GO:0032991">
    <property type="term" value="C:protein-containing complex"/>
    <property type="evidence" value="ECO:0007669"/>
    <property type="project" value="Ensembl"/>
</dbReference>
<dbReference type="GO" id="GO:0003682">
    <property type="term" value="F:chromatin binding"/>
    <property type="evidence" value="ECO:0000250"/>
    <property type="project" value="UniProtKB"/>
</dbReference>
<dbReference type="GO" id="GO:0003700">
    <property type="term" value="F:DNA-binding transcription factor activity"/>
    <property type="evidence" value="ECO:0000318"/>
    <property type="project" value="GO_Central"/>
</dbReference>
<dbReference type="GO" id="GO:0001227">
    <property type="term" value="F:DNA-binding transcription repressor activity, RNA polymerase II-specific"/>
    <property type="evidence" value="ECO:0007669"/>
    <property type="project" value="Ensembl"/>
</dbReference>
<dbReference type="GO" id="GO:0019904">
    <property type="term" value="F:protein domain specific binding"/>
    <property type="evidence" value="ECO:0007669"/>
    <property type="project" value="Ensembl"/>
</dbReference>
<dbReference type="GO" id="GO:0000978">
    <property type="term" value="F:RNA polymerase II cis-regulatory region sequence-specific DNA binding"/>
    <property type="evidence" value="ECO:0000318"/>
    <property type="project" value="GO_Central"/>
</dbReference>
<dbReference type="GO" id="GO:0008270">
    <property type="term" value="F:zinc ion binding"/>
    <property type="evidence" value="ECO:0007669"/>
    <property type="project" value="UniProtKB-KW"/>
</dbReference>
<dbReference type="GO" id="GO:0006357">
    <property type="term" value="P:regulation of transcription by RNA polymerase II"/>
    <property type="evidence" value="ECO:0000318"/>
    <property type="project" value="GO_Central"/>
</dbReference>
<dbReference type="FunFam" id="3.30.160.60:FF:000402">
    <property type="entry name" value="IKAROS family zinc finger 5"/>
    <property type="match status" value="1"/>
</dbReference>
<dbReference type="FunFam" id="3.30.160.60:FF:000924">
    <property type="entry name" value="IKAROS family zinc finger 5"/>
    <property type="match status" value="1"/>
</dbReference>
<dbReference type="FunFam" id="3.30.160.60:FF:001097">
    <property type="entry name" value="IKAROS family zinc finger 5"/>
    <property type="match status" value="1"/>
</dbReference>
<dbReference type="Gene3D" id="3.30.160.60">
    <property type="entry name" value="Classic Zinc Finger"/>
    <property type="match status" value="3"/>
</dbReference>
<dbReference type="InterPro" id="IPR050589">
    <property type="entry name" value="Ikaros_C2H2-ZF"/>
</dbReference>
<dbReference type="InterPro" id="IPR036236">
    <property type="entry name" value="Znf_C2H2_sf"/>
</dbReference>
<dbReference type="InterPro" id="IPR013087">
    <property type="entry name" value="Znf_C2H2_type"/>
</dbReference>
<dbReference type="PANTHER" id="PTHR24404">
    <property type="entry name" value="ZINC FINGER PROTEIN"/>
    <property type="match status" value="1"/>
</dbReference>
<dbReference type="PANTHER" id="PTHR24404:SF55">
    <property type="entry name" value="ZINC FINGER PROTEIN PEGASUS"/>
    <property type="match status" value="1"/>
</dbReference>
<dbReference type="SMART" id="SM00355">
    <property type="entry name" value="ZnF_C2H2"/>
    <property type="match status" value="5"/>
</dbReference>
<dbReference type="SUPFAM" id="SSF57667">
    <property type="entry name" value="beta-beta-alpha zinc fingers"/>
    <property type="match status" value="3"/>
</dbReference>
<dbReference type="PROSITE" id="PS00028">
    <property type="entry name" value="ZINC_FINGER_C2H2_1"/>
    <property type="match status" value="3"/>
</dbReference>
<dbReference type="PROSITE" id="PS50157">
    <property type="entry name" value="ZINC_FINGER_C2H2_2"/>
    <property type="match status" value="3"/>
</dbReference>
<name>IKZF5_CHICK</name>
<reference key="1">
    <citation type="journal article" date="2005" name="Genome Biol.">
        <title>Full-length cDNAs from chicken bursal lymphocytes to facilitate gene function analysis.</title>
        <authorList>
            <person name="Caldwell R.B."/>
            <person name="Kierzek A.M."/>
            <person name="Arakawa H."/>
            <person name="Bezzubov Y."/>
            <person name="Zaim J."/>
            <person name="Fiedler P."/>
            <person name="Kutter S."/>
            <person name="Blagodatski A."/>
            <person name="Kostovska D."/>
            <person name="Koter M."/>
            <person name="Plachy J."/>
            <person name="Carninci P."/>
            <person name="Hayashizaki Y."/>
            <person name="Buerstedde J.-M."/>
        </authorList>
    </citation>
    <scope>NUCLEOTIDE SEQUENCE [LARGE SCALE MRNA]</scope>
    <source>
        <strain>CB</strain>
        <tissue>Bursa of Fabricius</tissue>
    </source>
</reference>
<evidence type="ECO:0000250" key="1"/>
<evidence type="ECO:0000250" key="2">
    <source>
        <dbReference type="UniProtKB" id="Q9H5V7"/>
    </source>
</evidence>
<evidence type="ECO:0000255" key="3">
    <source>
        <dbReference type="PROSITE-ProRule" id="PRU00042"/>
    </source>
</evidence>
<evidence type="ECO:0000256" key="4">
    <source>
        <dbReference type="SAM" id="MobiDB-lite"/>
    </source>
</evidence>
<evidence type="ECO:0000305" key="5"/>
<accession>Q5ZLR2</accession>
<feature type="chain" id="PRO_0000299474" description="Zinc finger protein Pegasus">
    <location>
        <begin position="1"/>
        <end position="421"/>
    </location>
</feature>
<feature type="zinc finger region" description="C2H2-type 1" evidence="3">
    <location>
        <begin position="82"/>
        <end position="104"/>
    </location>
</feature>
<feature type="zinc finger region" description="C2H2-type 2" evidence="3">
    <location>
        <begin position="110"/>
        <end position="132"/>
    </location>
</feature>
<feature type="zinc finger region" description="C2H2-type 3" evidence="3">
    <location>
        <begin position="138"/>
        <end position="161"/>
    </location>
</feature>
<feature type="zinc finger region" description="C2H2-type 4" evidence="3">
    <location>
        <begin position="366"/>
        <end position="388"/>
    </location>
</feature>
<feature type="zinc finger region" description="C2H2-type 5" evidence="3">
    <location>
        <begin position="394"/>
        <end position="418"/>
    </location>
</feature>
<feature type="region of interest" description="Disordered" evidence="4">
    <location>
        <begin position="35"/>
        <end position="55"/>
    </location>
</feature>
<feature type="region of interest" description="Disordered" evidence="4">
    <location>
        <begin position="229"/>
        <end position="249"/>
    </location>
</feature>
<feature type="region of interest" description="Disordered" evidence="4">
    <location>
        <begin position="292"/>
        <end position="358"/>
    </location>
</feature>
<feature type="compositionally biased region" description="Polar residues" evidence="4">
    <location>
        <begin position="229"/>
        <end position="238"/>
    </location>
</feature>
<feature type="compositionally biased region" description="Low complexity" evidence="4">
    <location>
        <begin position="292"/>
        <end position="313"/>
    </location>
</feature>
<feature type="compositionally biased region" description="Polar residues" evidence="4">
    <location>
        <begin position="339"/>
        <end position="351"/>
    </location>
</feature>
<gene>
    <name type="primary">IKZF5</name>
    <name type="ORF">RCJMB04_5c6</name>
</gene>
<sequence>MGEKKPEPLDFVKDFQEYLTQQTHHVNMISGSVSGDKEAETLQGAGTEGDQNGLDHPSVEVSLDENSGMLVDGFERTFDGKLKCRYCNYASKGTARLIEHIRIHTGEKPHRCHLCPFASAYERHLEAHMRSHTGEKPYKCELCSFRCSDRSNLSHHRRRKHKMVPIKGTRSSLSSKKMWGVLQKKTSNLGYSRRALINLSPPSMVVHKPDYLNDFTHEIPNIQTEAYESMTKSSQTSGLPRDPQDLMVDNPLNQLSTLAGQLSSLPPENQNERGCSPDVVTCQDEKPFMMQQPATPAVVSSVSASIAQSSSPTSPDPRPAHNQRNYSPVAGPSSDRSAHTSTPSISNSQPSTPAPTLPVQDPQLLHHCQHCDMYFADNILYTIHMGCHGFENPFQCNICGCKCKNKYDFACHFARGQHSQH</sequence>
<protein>
    <recommendedName>
        <fullName>Zinc finger protein Pegasus</fullName>
    </recommendedName>
    <alternativeName>
        <fullName>Ikaros family zinc finger protein 5</fullName>
    </alternativeName>
</protein>